<organism>
    <name type="scientific">Canis lupus familiaris</name>
    <name type="common">Dog</name>
    <name type="synonym">Canis familiaris</name>
    <dbReference type="NCBI Taxonomy" id="9615"/>
    <lineage>
        <taxon>Eukaryota</taxon>
        <taxon>Metazoa</taxon>
        <taxon>Chordata</taxon>
        <taxon>Craniata</taxon>
        <taxon>Vertebrata</taxon>
        <taxon>Euteleostomi</taxon>
        <taxon>Mammalia</taxon>
        <taxon>Eutheria</taxon>
        <taxon>Laurasiatheria</taxon>
        <taxon>Carnivora</taxon>
        <taxon>Caniformia</taxon>
        <taxon>Canidae</taxon>
        <taxon>Canis</taxon>
    </lineage>
</organism>
<comment type="function">
    <molecule>Vasoactive intestinal peptide</molecule>
    <text evidence="1">VIP is a neuropeptide involved in a diverse array of physiological processes through activating the PACAP subfamily of class B1 G protein-coupled receptors: VIP receptor 1 (VPR1) and VIP receptor 2 (VPR2). Abundantly expressed throughout the CNS and peripheral nervous systems where they primarily exert neuroprotective and immune modulatory roles (By similarity). Also causes vasodilation, lowers arterial blood pressure, stimulates myocardial contractility, increases glycogenolysis and relaxes the smooth muscle of trachea, stomach and gall bladder (By similarity).</text>
</comment>
<comment type="subcellular location">
    <subcellularLocation>
        <location>Secreted</location>
    </subcellularLocation>
</comment>
<comment type="similarity">
    <text evidence="3">Belongs to the glucagon family.</text>
</comment>
<proteinExistence type="evidence at protein level"/>
<dbReference type="PIR" id="A60304">
    <property type="entry name" value="A60304"/>
</dbReference>
<dbReference type="BMRB" id="P63289"/>
<dbReference type="SMR" id="P63289"/>
<dbReference type="FunCoup" id="P63289">
    <property type="interactions" value="51"/>
</dbReference>
<dbReference type="eggNOG" id="ENOG502QVTA">
    <property type="taxonomic scope" value="Eukaryota"/>
</dbReference>
<dbReference type="InParanoid" id="P63289"/>
<dbReference type="OrthoDB" id="8795594at2759"/>
<dbReference type="Proteomes" id="UP000002254">
    <property type="component" value="Unplaced"/>
</dbReference>
<dbReference type="Proteomes" id="UP000694429">
    <property type="component" value="Unplaced"/>
</dbReference>
<dbReference type="Proteomes" id="UP000694542">
    <property type="component" value="Unplaced"/>
</dbReference>
<dbReference type="Proteomes" id="UP000805418">
    <property type="component" value="Unplaced"/>
</dbReference>
<dbReference type="GO" id="GO:0005576">
    <property type="term" value="C:extracellular region"/>
    <property type="evidence" value="ECO:0007669"/>
    <property type="project" value="UniProtKB-SubCell"/>
</dbReference>
<dbReference type="GO" id="GO:0005179">
    <property type="term" value="F:hormone activity"/>
    <property type="evidence" value="ECO:0000314"/>
    <property type="project" value="BHF-UCL"/>
</dbReference>
<dbReference type="GO" id="GO:0005184">
    <property type="term" value="F:neuropeptide hormone activity"/>
    <property type="evidence" value="ECO:0000250"/>
    <property type="project" value="UniProtKB"/>
</dbReference>
<dbReference type="GO" id="GO:0031891">
    <property type="term" value="F:type 1 vasoactive intestinal polypeptide receptor binding"/>
    <property type="evidence" value="ECO:0000250"/>
    <property type="project" value="UniProtKB"/>
</dbReference>
<dbReference type="GO" id="GO:0007189">
    <property type="term" value="P:adenylate cyclase-activating G protein-coupled receptor signaling pathway"/>
    <property type="evidence" value="ECO:0000314"/>
    <property type="project" value="BHF-UCL"/>
</dbReference>
<dbReference type="GO" id="GO:0048255">
    <property type="term" value="P:mRNA stabilization"/>
    <property type="evidence" value="ECO:0000250"/>
    <property type="project" value="AgBase"/>
</dbReference>
<dbReference type="GO" id="GO:0045732">
    <property type="term" value="P:positive regulation of protein catabolic process"/>
    <property type="evidence" value="ECO:0000314"/>
    <property type="project" value="BHF-UCL"/>
</dbReference>
<dbReference type="GO" id="GO:0070459">
    <property type="term" value="P:prolactin secretion"/>
    <property type="evidence" value="ECO:0000250"/>
    <property type="project" value="AgBase"/>
</dbReference>
<dbReference type="GO" id="GO:0032880">
    <property type="term" value="P:regulation of protein localization"/>
    <property type="evidence" value="ECO:0000314"/>
    <property type="project" value="BHF-UCL"/>
</dbReference>
<dbReference type="Gene3D" id="6.10.250.590">
    <property type="match status" value="1"/>
</dbReference>
<dbReference type="InterPro" id="IPR000532">
    <property type="entry name" value="Glucagon_GIP_secretin_VIP"/>
</dbReference>
<dbReference type="InterPro" id="IPR046963">
    <property type="entry name" value="VIP/GHRH-like"/>
</dbReference>
<dbReference type="PANTHER" id="PTHR11213">
    <property type="entry name" value="GLUCAGON-FAMILY NEUROPEPTIDE"/>
    <property type="match status" value="1"/>
</dbReference>
<dbReference type="PANTHER" id="PTHR11213:SF5">
    <property type="entry name" value="VIP PEPTIDES"/>
    <property type="match status" value="1"/>
</dbReference>
<dbReference type="Pfam" id="PF00123">
    <property type="entry name" value="Hormone_2"/>
    <property type="match status" value="1"/>
</dbReference>
<dbReference type="SMART" id="SM00070">
    <property type="entry name" value="GLUCA"/>
    <property type="match status" value="1"/>
</dbReference>
<dbReference type="PROSITE" id="PS00260">
    <property type="entry name" value="GLUCAGON"/>
    <property type="match status" value="1"/>
</dbReference>
<evidence type="ECO:0000250" key="1">
    <source>
        <dbReference type="UniProtKB" id="P01282"/>
    </source>
</evidence>
<evidence type="ECO:0000269" key="2">
    <source>
    </source>
</evidence>
<evidence type="ECO:0000305" key="3"/>
<sequence length="28" mass="3327">HSDAVFTDNYTRLRKQMAVKKYLNSILN</sequence>
<accession>P63289</accession>
<accession>P04565</accession>
<reference key="1">
    <citation type="journal article" date="1986" name="Peptides 7 Suppl.">
        <title>Purification and amino acid sequences of dog, goat and guinea pig VIPs.</title>
        <authorList>
            <person name="Eng J."/>
            <person name="Du B.-H."/>
            <person name="Raufman J.-P."/>
            <person name="Yalow R.S."/>
        </authorList>
    </citation>
    <scope>PROTEIN SEQUENCE</scope>
    <scope>AMIDATION AT ASN-28</scope>
</reference>
<gene>
    <name type="primary">VIP</name>
</gene>
<feature type="peptide" id="PRO_0000043939" description="Vasoactive intestinal peptide">
    <location>
        <begin position="1"/>
        <end position="28"/>
    </location>
</feature>
<feature type="modified residue" description="Asparagine amide" evidence="2">
    <location>
        <position position="28"/>
    </location>
</feature>
<keyword id="KW-0027">Amidation</keyword>
<keyword id="KW-0903">Direct protein sequencing</keyword>
<keyword id="KW-0372">Hormone</keyword>
<keyword id="KW-1185">Reference proteome</keyword>
<keyword id="KW-0964">Secreted</keyword>
<protein>
    <recommendedName>
        <fullName>Vasoactive intestinal peptide</fullName>
        <shortName>VIP</shortName>
    </recommendedName>
    <alternativeName>
        <fullName>Vasoactive intestinal polypeptide</fullName>
    </alternativeName>
</protein>
<name>VIP_CANLF</name>